<name>PARS_SPHYB</name>
<dbReference type="EMBL" id="CP010954">
    <property type="protein sequence ID" value="AJR25281.1"/>
    <property type="molecule type" value="Genomic_DNA"/>
</dbReference>
<dbReference type="RefSeq" id="WP_044662137.1">
    <property type="nucleotide sequence ID" value="NZ_CP010954.1"/>
</dbReference>
<dbReference type="PDB" id="6D0H">
    <property type="method" value="X-ray"/>
    <property type="resolution" value="1.50 A"/>
    <property type="chains" value="B/D=88-159"/>
</dbReference>
<dbReference type="PDB" id="6D0I">
    <property type="method" value="X-ray"/>
    <property type="resolution" value="1.55 A"/>
    <property type="chains" value="B/D=88-159"/>
</dbReference>
<dbReference type="PDBsum" id="6D0H"/>
<dbReference type="PDBsum" id="6D0I"/>
<dbReference type="SMR" id="A0A0C5XKJ0"/>
<dbReference type="STRING" id="484429.TZ53_17665"/>
<dbReference type="KEGG" id="syb:TZ53_17665"/>
<dbReference type="PATRIC" id="fig|484429.4.peg.3700"/>
<dbReference type="HOGENOM" id="CLU_109353_0_0_5"/>
<dbReference type="Proteomes" id="UP000032302">
    <property type="component" value="Chromosome"/>
</dbReference>
<dbReference type="GO" id="GO:0003677">
    <property type="term" value="F:DNA binding"/>
    <property type="evidence" value="ECO:0007669"/>
    <property type="project" value="InterPro"/>
</dbReference>
<dbReference type="InterPro" id="IPR046847">
    <property type="entry name" value="Xre-like_HTH"/>
</dbReference>
<dbReference type="InterPro" id="IPR024467">
    <property type="entry name" value="Xre/MbcA/ParS-like_toxin-bd"/>
</dbReference>
<dbReference type="Pfam" id="PF20432">
    <property type="entry name" value="Xre-like-HTH"/>
    <property type="match status" value="1"/>
</dbReference>
<dbReference type="Pfam" id="PF09722">
    <property type="entry name" value="Xre_MbcA_ParS_C"/>
    <property type="match status" value="1"/>
</dbReference>
<comment type="function">
    <text evidence="1">Antitoxin component of a type II toxin-antitoxin (TA) system. Neutralizes the bacteriostatic effect of cognate toxin ParT by inserting into its active site.</text>
</comment>
<comment type="subunit">
    <text evidence="1">Forms heterotetrameric ParS(2)-ParT(2) complexes. The 2 antitoxin fragments do not make contact in the crystal structure.</text>
</comment>
<comment type="domain">
    <text evidence="1">The C-terminus (residues 99-159) is sufficient to bind and neutralize toxin when expressed in E.coli.</text>
</comment>
<comment type="similarity">
    <text evidence="3">Belongs to the MbcA/ParS/Xre antitoxin family.</text>
</comment>
<proteinExistence type="evidence at protein level"/>
<sequence length="159" mass="17037">MSELETGARKAQGKGTPPFAYKALYRASPVDRIGVIKKGVAASDLKRFIAALHVDQKVMFDALNLKTATVNKKAANNQPLSTEDSERVLGLAKLVGQLEDMVEESGETDGFDAPEWLSSWLRQPLPALGGVNPIDLLDTMEGQAVVSRALAQIQSGAFA</sequence>
<keyword id="KW-0002">3D-structure</keyword>
<keyword id="KW-1277">Toxin-antitoxin system</keyword>
<reference key="1">
    <citation type="submission" date="2015-02" db="EMBL/GenBank/DDBJ databases">
        <title>The analysis of one genome.</title>
        <authorList>
            <person name="Yan X."/>
        </authorList>
    </citation>
    <scope>NUCLEOTIDE SEQUENCE [LARGE SCALE GENOMIC DNA]</scope>
    <source>
        <strain>YBL2</strain>
    </source>
</reference>
<reference evidence="4 5" key="2">
    <citation type="journal article" date="2019" name="Proc. Natl. Acad. Sci. U.S.A.">
        <title>ParST is a widespread toxin-antitoxin module that targets nucleotide metabolism.</title>
        <authorList>
            <person name="Piscotta F.J."/>
            <person name="Jeffrey P.D."/>
            <person name="Link A.J."/>
        </authorList>
    </citation>
    <scope>X-RAY CRYSTALLOGRAPHY (1.50 ANGSTROMS) OF 88-159 IN COMPLEX WITH TOXIN</scope>
    <scope>FUNCTION AS AN ANTITOXIN</scope>
    <scope>DOMAIN</scope>
    <source>
        <strain>YBL2</strain>
    </source>
</reference>
<evidence type="ECO:0000269" key="1">
    <source>
    </source>
</evidence>
<evidence type="ECO:0000303" key="2">
    <source>
    </source>
</evidence>
<evidence type="ECO:0000305" key="3"/>
<evidence type="ECO:0007744" key="4">
    <source>
        <dbReference type="PDB" id="6D0H"/>
    </source>
</evidence>
<evidence type="ECO:0007744" key="5">
    <source>
        <dbReference type="PDB" id="6D0I"/>
    </source>
</evidence>
<evidence type="ECO:0007829" key="6">
    <source>
        <dbReference type="PDB" id="6D0H"/>
    </source>
</evidence>
<protein>
    <recommendedName>
        <fullName evidence="2">Prs ADP-ribosylating antitoxin</fullName>
    </recommendedName>
</protein>
<feature type="chain" id="PRO_0000448600" description="Prs ADP-ribosylating antitoxin">
    <location>
        <begin position="1"/>
        <end position="159"/>
    </location>
</feature>
<feature type="region of interest" description="Sufficient to neutralize toxin" evidence="1">
    <location>
        <begin position="99"/>
        <end position="159"/>
    </location>
</feature>
<feature type="helix" evidence="6">
    <location>
        <begin position="91"/>
        <end position="105"/>
    </location>
</feature>
<feature type="helix" evidence="6">
    <location>
        <begin position="113"/>
        <end position="121"/>
    </location>
</feature>
<feature type="helix" evidence="6">
    <location>
        <begin position="126"/>
        <end position="128"/>
    </location>
</feature>
<feature type="helix" evidence="6">
    <location>
        <begin position="133"/>
        <end position="136"/>
    </location>
</feature>
<feature type="helix" evidence="6">
    <location>
        <begin position="140"/>
        <end position="155"/>
    </location>
</feature>
<gene>
    <name evidence="2" type="primary">parS</name>
    <name evidence="2" type="synonym">yblJ</name>
    <name type="ORF">TZ53_17665</name>
</gene>
<organism>
    <name type="scientific">Sphingobium sp. (strain YBL2)</name>
    <dbReference type="NCBI Taxonomy" id="484429"/>
    <lineage>
        <taxon>Bacteria</taxon>
        <taxon>Pseudomonadati</taxon>
        <taxon>Pseudomonadota</taxon>
        <taxon>Alphaproteobacteria</taxon>
        <taxon>Sphingomonadales</taxon>
        <taxon>Sphingomonadaceae</taxon>
        <taxon>Sphingobium</taxon>
    </lineage>
</organism>
<accession>A0A0C5XKJ0</accession>